<protein>
    <recommendedName>
        <fullName>Putative formate dehydrogenase SAOUHSC_02582</fullName>
        <ecNumber>1.17.1.9</ecNumber>
    </recommendedName>
</protein>
<sequence>MQEHLVVTLDGKDYLVEPGTNLLEFIKSQDTFVPSICYNESMGPIQTCDTCTVEIDGKIERSCSTVIDRPMTVNTVNNDVKDAQKEALDRILEKHMLYCTVCDYNNGDCEIHNTMDAWGLQHQTYEYKEKPYEKDYGPFYRYDPNQCILCGRCVEACQDIEVNETIRIDWDREHPRVIWDNDVPINESSCVSCGQCATVCPCNAMMEVNMEGNAGYMTDTEPGSLAAMIDLTKKAEPGYGPLFAISDSEAEMRKERIKKTKTVCTYCGVGCSFEVWTKDREILKVQPSHDSPANKIATCVKGKFSWGHINSDQRLTKPLVRKNGEFHEVEWDEALNVIADNFTAIKEKHGPDALSFISSSKATNEESYLMQKLARQVIGTNNVDNCSRYCQAPATKGLFRTVGHGGDSGSIEDLEKAAMSVLIGTNTAEAHPVIASRMKRAQKLFGQKIHVFDIRKHEMAERADRFYQPKPGTDLAWLSAVTKYIIDHDLHDKAFIDEWVDDFDEYYKSLETFTMAFAEEATGIPESELIKFAEECAKAESVVICWAMGITQQDIGSDSSTAISNLLLVTGNYRRPGTGAYPLRGHNNVQGCSDMGSMPDKITGYQSIEADDIRAKFEKEYGVKLNPKAGKDNHEMVEGIHDGEVHSLYLYGEDTGIVDSNINFVQAAFEKLDFMVVQDEFLTFTATYADVVLPASPSLEKDGTFTNTERRIQRLYQALEPLGDSKPDWKIFQAIANRLGFDWNYKHPSEIMDEVARLTPLYAGVSYDRLEGFNSLQWPVQPDGTDEPILYLEGFNFDNGKAKLFPLSFDNYFKQDEIYDIHVNNGRLLEHFHEGNMTYQTPMIKYKVPRAFVEISPELAEDRGIHEGAEVKLISETGEAVLQVHVTDRVKGKEIYIPLNNDAMENGDLGAINLLTNSDVDQYTDTPSYKRTSCRLEVITKRGKSPLNPNNFRVNKKRQPQYSVQVQKKWERSDYVFPGNQVDK</sequence>
<evidence type="ECO:0000250" key="1"/>
<evidence type="ECO:0000255" key="2">
    <source>
        <dbReference type="PROSITE-ProRule" id="PRU00465"/>
    </source>
</evidence>
<evidence type="ECO:0000255" key="3">
    <source>
        <dbReference type="PROSITE-ProRule" id="PRU00711"/>
    </source>
</evidence>
<evidence type="ECO:0000255" key="4">
    <source>
        <dbReference type="PROSITE-ProRule" id="PRU01004"/>
    </source>
</evidence>
<evidence type="ECO:0000255" key="5">
    <source>
        <dbReference type="PROSITE-ProRule" id="PRU01184"/>
    </source>
</evidence>
<evidence type="ECO:0000305" key="6"/>
<accession>Q2FVV9</accession>
<dbReference type="EC" id="1.17.1.9"/>
<dbReference type="EMBL" id="CP000253">
    <property type="protein sequence ID" value="ABD31593.1"/>
    <property type="molecule type" value="Genomic_DNA"/>
</dbReference>
<dbReference type="RefSeq" id="YP_501044.1">
    <property type="nucleotide sequence ID" value="NC_007795.1"/>
</dbReference>
<dbReference type="SMR" id="Q2FVV9"/>
<dbReference type="STRING" id="93061.SAOUHSC_02582"/>
<dbReference type="PaxDb" id="1280-SAXN108_2557"/>
<dbReference type="GeneID" id="3921578"/>
<dbReference type="KEGG" id="sao:SAOUHSC_02582"/>
<dbReference type="PATRIC" id="fig|93061.5.peg.2331"/>
<dbReference type="eggNOG" id="COG3383">
    <property type="taxonomic scope" value="Bacteria"/>
</dbReference>
<dbReference type="HOGENOM" id="CLU_000422_2_1_9"/>
<dbReference type="OrthoDB" id="9805142at2"/>
<dbReference type="PRO" id="PR:Q2FVV9"/>
<dbReference type="Proteomes" id="UP000008816">
    <property type="component" value="Chromosome"/>
</dbReference>
<dbReference type="GO" id="GO:0016020">
    <property type="term" value="C:membrane"/>
    <property type="evidence" value="ECO:0000318"/>
    <property type="project" value="GO_Central"/>
</dbReference>
<dbReference type="GO" id="GO:0051537">
    <property type="term" value="F:2 iron, 2 sulfur cluster binding"/>
    <property type="evidence" value="ECO:0007669"/>
    <property type="project" value="UniProtKB-KW"/>
</dbReference>
<dbReference type="GO" id="GO:0051539">
    <property type="term" value="F:4 iron, 4 sulfur cluster binding"/>
    <property type="evidence" value="ECO:0007669"/>
    <property type="project" value="UniProtKB-KW"/>
</dbReference>
<dbReference type="GO" id="GO:0008863">
    <property type="term" value="F:formate dehydrogenase (NAD+) activity"/>
    <property type="evidence" value="ECO:0007669"/>
    <property type="project" value="UniProtKB-EC"/>
</dbReference>
<dbReference type="GO" id="GO:0046872">
    <property type="term" value="F:metal ion binding"/>
    <property type="evidence" value="ECO:0007669"/>
    <property type="project" value="UniProtKB-KW"/>
</dbReference>
<dbReference type="GO" id="GO:0043546">
    <property type="term" value="F:molybdopterin cofactor binding"/>
    <property type="evidence" value="ECO:0007669"/>
    <property type="project" value="InterPro"/>
</dbReference>
<dbReference type="GO" id="GO:0015942">
    <property type="term" value="P:formate metabolic process"/>
    <property type="evidence" value="ECO:0007669"/>
    <property type="project" value="InterPro"/>
</dbReference>
<dbReference type="GO" id="GO:0022904">
    <property type="term" value="P:respiratory electron transport chain"/>
    <property type="evidence" value="ECO:0000318"/>
    <property type="project" value="GO_Central"/>
</dbReference>
<dbReference type="CDD" id="cd00207">
    <property type="entry name" value="fer2"/>
    <property type="match status" value="1"/>
</dbReference>
<dbReference type="CDD" id="cd02792">
    <property type="entry name" value="MopB_CT_Formate-Dh-Na-like"/>
    <property type="match status" value="1"/>
</dbReference>
<dbReference type="CDD" id="cd02753">
    <property type="entry name" value="MopB_Formate-Dh-H"/>
    <property type="match status" value="1"/>
</dbReference>
<dbReference type="FunFam" id="2.20.25.90:FF:000001">
    <property type="entry name" value="Formate dehydrogenase subunit alpha"/>
    <property type="match status" value="1"/>
</dbReference>
<dbReference type="FunFam" id="3.10.20.740:FF:000003">
    <property type="entry name" value="Formate dehydrogenase subunit alpha"/>
    <property type="match status" value="1"/>
</dbReference>
<dbReference type="FunFam" id="3.40.228.10:FF:000002">
    <property type="entry name" value="Formate dehydrogenase subunit alpha"/>
    <property type="match status" value="1"/>
</dbReference>
<dbReference type="FunFam" id="3.30.70.20:FF:000032">
    <property type="entry name" value="Formate dehydrogenase, alpha subunit"/>
    <property type="match status" value="1"/>
</dbReference>
<dbReference type="FunFam" id="2.40.40.20:FF:000005">
    <property type="entry name" value="Periplasmic nitrate reductase"/>
    <property type="match status" value="1"/>
</dbReference>
<dbReference type="Gene3D" id="2.40.40.20">
    <property type="match status" value="1"/>
</dbReference>
<dbReference type="Gene3D" id="3.10.20.740">
    <property type="match status" value="1"/>
</dbReference>
<dbReference type="Gene3D" id="3.30.70.20">
    <property type="match status" value="1"/>
</dbReference>
<dbReference type="Gene3D" id="3.40.50.740">
    <property type="match status" value="1"/>
</dbReference>
<dbReference type="Gene3D" id="2.20.25.90">
    <property type="entry name" value="ADC-like domains"/>
    <property type="match status" value="1"/>
</dbReference>
<dbReference type="Gene3D" id="3.40.228.10">
    <property type="entry name" value="Dimethylsulfoxide Reductase, domain 2"/>
    <property type="match status" value="1"/>
</dbReference>
<dbReference type="InterPro" id="IPR036010">
    <property type="entry name" value="2Fe-2S_ferredoxin-like_sf"/>
</dbReference>
<dbReference type="InterPro" id="IPR001041">
    <property type="entry name" value="2Fe-2S_ferredoxin-type"/>
</dbReference>
<dbReference type="InterPro" id="IPR017896">
    <property type="entry name" value="4Fe4S_Fe-S-bd"/>
</dbReference>
<dbReference type="InterPro" id="IPR017900">
    <property type="entry name" value="4Fe4S_Fe_S_CS"/>
</dbReference>
<dbReference type="InterPro" id="IPR009010">
    <property type="entry name" value="Asp_de-COase-like_dom_sf"/>
</dbReference>
<dbReference type="InterPro" id="IPR041924">
    <property type="entry name" value="Formate_Dh-H_N"/>
</dbReference>
<dbReference type="InterPro" id="IPR006478">
    <property type="entry name" value="Formate_DH_asu"/>
</dbReference>
<dbReference type="InterPro" id="IPR006657">
    <property type="entry name" value="MoPterin_dinucl-bd_dom"/>
</dbReference>
<dbReference type="InterPro" id="IPR006656">
    <property type="entry name" value="Mopterin_OxRdtase"/>
</dbReference>
<dbReference type="InterPro" id="IPR006963">
    <property type="entry name" value="Mopterin_OxRdtase_4Fe-4S_dom"/>
</dbReference>
<dbReference type="InterPro" id="IPR006655">
    <property type="entry name" value="Mopterin_OxRdtase_prok_CS"/>
</dbReference>
<dbReference type="InterPro" id="IPR027467">
    <property type="entry name" value="MopterinOxRdtase_cofactor_BS"/>
</dbReference>
<dbReference type="InterPro" id="IPR019574">
    <property type="entry name" value="NADH_UbQ_OxRdtase_Gsu_4Fe4S-bd"/>
</dbReference>
<dbReference type="InterPro" id="IPR050123">
    <property type="entry name" value="Prok_molybdopt-oxidoreductase"/>
</dbReference>
<dbReference type="NCBIfam" id="TIGR01591">
    <property type="entry name" value="Fdh-alpha"/>
    <property type="match status" value="1"/>
</dbReference>
<dbReference type="PANTHER" id="PTHR43105:SF14">
    <property type="entry name" value="FORMATE DEHYDROGENASE H"/>
    <property type="match status" value="1"/>
</dbReference>
<dbReference type="PANTHER" id="PTHR43105">
    <property type="entry name" value="RESPIRATORY NITRATE REDUCTASE"/>
    <property type="match status" value="1"/>
</dbReference>
<dbReference type="Pfam" id="PF13510">
    <property type="entry name" value="Fer2_4"/>
    <property type="match status" value="1"/>
</dbReference>
<dbReference type="Pfam" id="PF12838">
    <property type="entry name" value="Fer4_7"/>
    <property type="match status" value="1"/>
</dbReference>
<dbReference type="Pfam" id="PF04879">
    <property type="entry name" value="Molybdop_Fe4S4"/>
    <property type="match status" value="1"/>
</dbReference>
<dbReference type="Pfam" id="PF00384">
    <property type="entry name" value="Molybdopterin"/>
    <property type="match status" value="1"/>
</dbReference>
<dbReference type="Pfam" id="PF01568">
    <property type="entry name" value="Molydop_binding"/>
    <property type="match status" value="1"/>
</dbReference>
<dbReference type="Pfam" id="PF10588">
    <property type="entry name" value="NADH-G_4Fe-4S_3"/>
    <property type="match status" value="1"/>
</dbReference>
<dbReference type="PIRSF" id="PIRSF036643">
    <property type="entry name" value="FDH_alpha"/>
    <property type="match status" value="1"/>
</dbReference>
<dbReference type="SMART" id="SM00926">
    <property type="entry name" value="Molybdop_Fe4S4"/>
    <property type="match status" value="1"/>
</dbReference>
<dbReference type="SMART" id="SM00929">
    <property type="entry name" value="NADH-G_4Fe-4S_3"/>
    <property type="match status" value="1"/>
</dbReference>
<dbReference type="SUPFAM" id="SSF54292">
    <property type="entry name" value="2Fe-2S ferredoxin-like"/>
    <property type="match status" value="1"/>
</dbReference>
<dbReference type="SUPFAM" id="SSF54862">
    <property type="entry name" value="4Fe-4S ferredoxins"/>
    <property type="match status" value="1"/>
</dbReference>
<dbReference type="SUPFAM" id="SSF50692">
    <property type="entry name" value="ADC-like"/>
    <property type="match status" value="1"/>
</dbReference>
<dbReference type="SUPFAM" id="SSF53706">
    <property type="entry name" value="Formate dehydrogenase/DMSO reductase, domains 1-3"/>
    <property type="match status" value="1"/>
</dbReference>
<dbReference type="PROSITE" id="PS51085">
    <property type="entry name" value="2FE2S_FER_2"/>
    <property type="match status" value="1"/>
</dbReference>
<dbReference type="PROSITE" id="PS00198">
    <property type="entry name" value="4FE4S_FER_1"/>
    <property type="match status" value="1"/>
</dbReference>
<dbReference type="PROSITE" id="PS51379">
    <property type="entry name" value="4FE4S_FER_2"/>
    <property type="match status" value="2"/>
</dbReference>
<dbReference type="PROSITE" id="PS51839">
    <property type="entry name" value="4FE4S_HC3"/>
    <property type="match status" value="1"/>
</dbReference>
<dbReference type="PROSITE" id="PS51669">
    <property type="entry name" value="4FE4S_MOW_BIS_MGD"/>
    <property type="match status" value="1"/>
</dbReference>
<dbReference type="PROSITE" id="PS00551">
    <property type="entry name" value="MOLYBDOPTERIN_PROK_1"/>
    <property type="match status" value="1"/>
</dbReference>
<dbReference type="PROSITE" id="PS00932">
    <property type="entry name" value="MOLYBDOPTERIN_PROK_3"/>
    <property type="match status" value="1"/>
</dbReference>
<feature type="chain" id="PRO_0000304134" description="Putative formate dehydrogenase SAOUHSC_02582">
    <location>
        <begin position="1"/>
        <end position="984"/>
    </location>
</feature>
<feature type="domain" description="2Fe-2S ferredoxin-type" evidence="2">
    <location>
        <begin position="3"/>
        <end position="79"/>
    </location>
</feature>
<feature type="domain" description="4Fe-4S His(Cys)3-ligated-type" evidence="5">
    <location>
        <begin position="79"/>
        <end position="119"/>
    </location>
</feature>
<feature type="domain" description="4Fe-4S ferredoxin-type 1" evidence="3">
    <location>
        <begin position="138"/>
        <end position="165"/>
    </location>
</feature>
<feature type="domain" description="4Fe-4S ferredoxin-type 2" evidence="3">
    <location>
        <begin position="181"/>
        <end position="211"/>
    </location>
</feature>
<feature type="domain" description="4Fe-4S Mo/W bis-MGD-type" evidence="4">
    <location>
        <begin position="257"/>
        <end position="313"/>
    </location>
</feature>
<feature type="region of interest" description="Formate dehydrogenase">
    <location>
        <begin position="252"/>
        <end position="984"/>
    </location>
</feature>
<feature type="binding site" evidence="1">
    <location>
        <position position="37"/>
    </location>
    <ligand>
        <name>[2Fe-2S] cluster</name>
        <dbReference type="ChEBI" id="CHEBI:190135"/>
    </ligand>
</feature>
<feature type="binding site" evidence="1">
    <location>
        <position position="48"/>
    </location>
    <ligand>
        <name>[2Fe-2S] cluster</name>
        <dbReference type="ChEBI" id="CHEBI:190135"/>
    </ligand>
</feature>
<feature type="binding site" evidence="1">
    <location>
        <position position="51"/>
    </location>
    <ligand>
        <name>[2Fe-2S] cluster</name>
        <dbReference type="ChEBI" id="CHEBI:190135"/>
    </ligand>
</feature>
<feature type="binding site" evidence="1">
    <location>
        <position position="63"/>
    </location>
    <ligand>
        <name>[2Fe-2S] cluster</name>
        <dbReference type="ChEBI" id="CHEBI:190135"/>
    </ligand>
</feature>
<feature type="binding site" evidence="5">
    <location>
        <position position="95"/>
    </location>
    <ligand>
        <name>[4Fe-4S] cluster</name>
        <dbReference type="ChEBI" id="CHEBI:49883"/>
        <label>1</label>
    </ligand>
</feature>
<feature type="binding site" evidence="5">
    <location>
        <position position="99"/>
    </location>
    <ligand>
        <name>[4Fe-4S] cluster</name>
        <dbReference type="ChEBI" id="CHEBI:49883"/>
        <label>1</label>
    </ligand>
</feature>
<feature type="binding site" evidence="5">
    <location>
        <position position="102"/>
    </location>
    <ligand>
        <name>[4Fe-4S] cluster</name>
        <dbReference type="ChEBI" id="CHEBI:49883"/>
        <label>1</label>
    </ligand>
</feature>
<feature type="binding site" evidence="5">
    <location>
        <position position="109"/>
    </location>
    <ligand>
        <name>[4Fe-4S] cluster</name>
        <dbReference type="ChEBI" id="CHEBI:49883"/>
        <label>1</label>
    </ligand>
</feature>
<feature type="binding site" evidence="1">
    <location>
        <position position="147"/>
    </location>
    <ligand>
        <name>[4Fe-4S] cluster</name>
        <dbReference type="ChEBI" id="CHEBI:49883"/>
        <label>2</label>
    </ligand>
</feature>
<feature type="binding site" evidence="1">
    <location>
        <position position="150"/>
    </location>
    <ligand>
        <name>[4Fe-4S] cluster</name>
        <dbReference type="ChEBI" id="CHEBI:49883"/>
        <label>2</label>
    </ligand>
</feature>
<feature type="binding site" evidence="1">
    <location>
        <position position="153"/>
    </location>
    <ligand>
        <name>[4Fe-4S] cluster</name>
        <dbReference type="ChEBI" id="CHEBI:49883"/>
        <label>2</label>
    </ligand>
</feature>
<feature type="binding site" evidence="1">
    <location>
        <position position="157"/>
    </location>
    <ligand>
        <name>[4Fe-4S] cluster</name>
        <dbReference type="ChEBI" id="CHEBI:49883"/>
        <label>3</label>
    </ligand>
</feature>
<feature type="binding site" evidence="1">
    <location>
        <position position="190"/>
    </location>
    <ligand>
        <name>[4Fe-4S] cluster</name>
        <dbReference type="ChEBI" id="CHEBI:49883"/>
        <label>3</label>
    </ligand>
</feature>
<feature type="binding site" evidence="1">
    <location>
        <position position="193"/>
    </location>
    <ligand>
        <name>[4Fe-4S] cluster</name>
        <dbReference type="ChEBI" id="CHEBI:49883"/>
        <label>3</label>
    </ligand>
</feature>
<feature type="binding site" evidence="1">
    <location>
        <position position="196"/>
    </location>
    <ligand>
        <name>[4Fe-4S] cluster</name>
        <dbReference type="ChEBI" id="CHEBI:49883"/>
        <label>3</label>
    </ligand>
</feature>
<feature type="binding site" evidence="1">
    <location>
        <position position="200"/>
    </location>
    <ligand>
        <name>[4Fe-4S] cluster</name>
        <dbReference type="ChEBI" id="CHEBI:49883"/>
        <label>2</label>
    </ligand>
</feature>
<feature type="binding site" evidence="1">
    <location>
        <position position="264"/>
    </location>
    <ligand>
        <name>[4Fe-4S] cluster</name>
        <dbReference type="ChEBI" id="CHEBI:49883"/>
        <label>4</label>
    </ligand>
</feature>
<feature type="binding site" evidence="1">
    <location>
        <position position="267"/>
    </location>
    <ligand>
        <name>[4Fe-4S] cluster</name>
        <dbReference type="ChEBI" id="CHEBI:49883"/>
        <label>4</label>
    </ligand>
</feature>
<feature type="binding site" evidence="1">
    <location>
        <position position="271"/>
    </location>
    <ligand>
        <name>[4Fe-4S] cluster</name>
        <dbReference type="ChEBI" id="CHEBI:49883"/>
        <label>4</label>
    </ligand>
</feature>
<feature type="binding site" evidence="1">
    <location>
        <position position="299"/>
    </location>
    <ligand>
        <name>[4Fe-4S] cluster</name>
        <dbReference type="ChEBI" id="CHEBI:49883"/>
        <label>4</label>
    </ligand>
</feature>
<name>FDHL_STAA8</name>
<keyword id="KW-0001">2Fe-2S</keyword>
<keyword id="KW-0004">4Fe-4S</keyword>
<keyword id="KW-0408">Iron</keyword>
<keyword id="KW-0411">Iron-sulfur</keyword>
<keyword id="KW-0479">Metal-binding</keyword>
<keyword id="KW-0500">Molybdenum</keyword>
<keyword id="KW-0520">NAD</keyword>
<keyword id="KW-0560">Oxidoreductase</keyword>
<keyword id="KW-1185">Reference proteome</keyword>
<keyword id="KW-0677">Repeat</keyword>
<proteinExistence type="inferred from homology"/>
<gene>
    <name type="ordered locus">SAOUHSC_02582</name>
</gene>
<reference key="1">
    <citation type="book" date="2006" name="Gram positive pathogens, 2nd edition">
        <title>The Staphylococcus aureus NCTC 8325 genome.</title>
        <editorList>
            <person name="Fischetti V."/>
            <person name="Novick R."/>
            <person name="Ferretti J."/>
            <person name="Portnoy D."/>
            <person name="Rood J."/>
        </editorList>
        <authorList>
            <person name="Gillaspy A.F."/>
            <person name="Worrell V."/>
            <person name="Orvis J."/>
            <person name="Roe B.A."/>
            <person name="Dyer D.W."/>
            <person name="Iandolo J.J."/>
        </authorList>
    </citation>
    <scope>NUCLEOTIDE SEQUENCE [LARGE SCALE GENOMIC DNA]</scope>
    <source>
        <strain>NCTC 8325 / PS 47</strain>
    </source>
</reference>
<comment type="catalytic activity">
    <reaction>
        <text>formate + NAD(+) = CO2 + NADH</text>
        <dbReference type="Rhea" id="RHEA:15985"/>
        <dbReference type="ChEBI" id="CHEBI:15740"/>
        <dbReference type="ChEBI" id="CHEBI:16526"/>
        <dbReference type="ChEBI" id="CHEBI:57540"/>
        <dbReference type="ChEBI" id="CHEBI:57945"/>
        <dbReference type="EC" id="1.17.1.9"/>
    </reaction>
</comment>
<comment type="cofactor">
    <cofactor evidence="1">
        <name>[2Fe-2S] cluster</name>
        <dbReference type="ChEBI" id="CHEBI:190135"/>
    </cofactor>
    <text evidence="1">Binds 1 [2Fe-2S] cluster.</text>
</comment>
<comment type="cofactor">
    <cofactor evidence="1">
        <name>[4Fe-4S] cluster</name>
        <dbReference type="ChEBI" id="CHEBI:49883"/>
    </cofactor>
    <text evidence="1">Binds 4 [4Fe-4S] clusters.</text>
</comment>
<comment type="cofactor">
    <cofactor evidence="1">
        <name>Mo-bis(molybdopterin guanine dinucleotide)</name>
        <dbReference type="ChEBI" id="CHEBI:60539"/>
    </cofactor>
    <text evidence="1">Binds 1 molybdenum-bis(molybdopterin guanine dinucleotide) (Mo-bis-MGD) cofactor per subunit.</text>
</comment>
<comment type="similarity">
    <text evidence="6">In the C-terminal section; belongs to the prokaryotic molybdopterin-containing oxidoreductase family.</text>
</comment>
<organism>
    <name type="scientific">Staphylococcus aureus (strain NCTC 8325 / PS 47)</name>
    <dbReference type="NCBI Taxonomy" id="93061"/>
    <lineage>
        <taxon>Bacteria</taxon>
        <taxon>Bacillati</taxon>
        <taxon>Bacillota</taxon>
        <taxon>Bacilli</taxon>
        <taxon>Bacillales</taxon>
        <taxon>Staphylococcaceae</taxon>
        <taxon>Staphylococcus</taxon>
    </lineage>
</organism>